<comment type="function">
    <text evidence="1">Catalyzes the synthesis of beta-nicotinate D-ribonucleotide from nicotinate and 5-phospho-D-ribose 1-phosphate at the expense of ATP.</text>
</comment>
<comment type="catalytic activity">
    <reaction evidence="1">
        <text>nicotinate + 5-phospho-alpha-D-ribose 1-diphosphate + ATP + H2O = nicotinate beta-D-ribonucleotide + ADP + phosphate + diphosphate</text>
        <dbReference type="Rhea" id="RHEA:36163"/>
        <dbReference type="ChEBI" id="CHEBI:15377"/>
        <dbReference type="ChEBI" id="CHEBI:30616"/>
        <dbReference type="ChEBI" id="CHEBI:32544"/>
        <dbReference type="ChEBI" id="CHEBI:33019"/>
        <dbReference type="ChEBI" id="CHEBI:43474"/>
        <dbReference type="ChEBI" id="CHEBI:57502"/>
        <dbReference type="ChEBI" id="CHEBI:58017"/>
        <dbReference type="ChEBI" id="CHEBI:456216"/>
        <dbReference type="EC" id="6.3.4.21"/>
    </reaction>
</comment>
<comment type="pathway">
    <text evidence="1">Cofactor biosynthesis; NAD(+) biosynthesis; nicotinate D-ribonucleotide from nicotinate: step 1/1.</text>
</comment>
<comment type="PTM">
    <text evidence="1">Transiently phosphorylated on a His residue during the reaction cycle. Phosphorylation strongly increases the affinity for substrates and increases the rate of nicotinate D-ribonucleotide production. Dephosphorylation regenerates the low-affinity form of the enzyme, leading to product release.</text>
</comment>
<comment type="similarity">
    <text evidence="1">Belongs to the NAPRTase family.</text>
</comment>
<protein>
    <recommendedName>
        <fullName evidence="1">Nicotinate phosphoribosyltransferase</fullName>
        <shortName evidence="1">NAPRTase</shortName>
        <ecNumber evidence="1">6.3.4.21</ecNumber>
    </recommendedName>
</protein>
<organism>
    <name type="scientific">Brucella abortus (strain S19)</name>
    <dbReference type="NCBI Taxonomy" id="430066"/>
    <lineage>
        <taxon>Bacteria</taxon>
        <taxon>Pseudomonadati</taxon>
        <taxon>Pseudomonadota</taxon>
        <taxon>Alphaproteobacteria</taxon>
        <taxon>Hyphomicrobiales</taxon>
        <taxon>Brucellaceae</taxon>
        <taxon>Brucella/Ochrobactrum group</taxon>
        <taxon>Brucella</taxon>
    </lineage>
</organism>
<proteinExistence type="inferred from homology"/>
<feature type="chain" id="PRO_1000129462" description="Nicotinate phosphoribosyltransferase">
    <location>
        <begin position="1"/>
        <end position="434"/>
    </location>
</feature>
<feature type="modified residue" description="Phosphohistidine; by autocatalysis" evidence="1">
    <location>
        <position position="242"/>
    </location>
</feature>
<evidence type="ECO:0000255" key="1">
    <source>
        <dbReference type="HAMAP-Rule" id="MF_00570"/>
    </source>
</evidence>
<dbReference type="EC" id="6.3.4.21" evidence="1"/>
<dbReference type="EMBL" id="CP000887">
    <property type="protein sequence ID" value="ACD71662.1"/>
    <property type="molecule type" value="Genomic_DNA"/>
</dbReference>
<dbReference type="RefSeq" id="WP_002965361.1">
    <property type="nucleotide sequence ID" value="NC_010742.1"/>
</dbReference>
<dbReference type="SMR" id="B2S8A9"/>
<dbReference type="GeneID" id="97534468"/>
<dbReference type="KEGG" id="bmc:BAbS19_I01040"/>
<dbReference type="HOGENOM" id="CLU_030991_1_0_5"/>
<dbReference type="UniPathway" id="UPA00253">
    <property type="reaction ID" value="UER00457"/>
</dbReference>
<dbReference type="Proteomes" id="UP000002565">
    <property type="component" value="Chromosome 1"/>
</dbReference>
<dbReference type="GO" id="GO:0005829">
    <property type="term" value="C:cytosol"/>
    <property type="evidence" value="ECO:0007669"/>
    <property type="project" value="TreeGrafter"/>
</dbReference>
<dbReference type="GO" id="GO:0004516">
    <property type="term" value="F:nicotinate phosphoribosyltransferase activity"/>
    <property type="evidence" value="ECO:0007669"/>
    <property type="project" value="UniProtKB-UniRule"/>
</dbReference>
<dbReference type="GO" id="GO:0034355">
    <property type="term" value="P:NAD biosynthetic process via the salvage pathway"/>
    <property type="evidence" value="ECO:0007669"/>
    <property type="project" value="TreeGrafter"/>
</dbReference>
<dbReference type="Gene3D" id="3.20.140.10">
    <property type="entry name" value="nicotinate phosphoribosyltransferase"/>
    <property type="match status" value="1"/>
</dbReference>
<dbReference type="HAMAP" id="MF_00570">
    <property type="entry name" value="NAPRTase"/>
    <property type="match status" value="1"/>
</dbReference>
<dbReference type="InterPro" id="IPR041525">
    <property type="entry name" value="N/Namide_PRibTrfase"/>
</dbReference>
<dbReference type="InterPro" id="IPR040727">
    <property type="entry name" value="NAPRTase_N"/>
</dbReference>
<dbReference type="InterPro" id="IPR006406">
    <property type="entry name" value="Nic_PRibTrfase"/>
</dbReference>
<dbReference type="InterPro" id="IPR007229">
    <property type="entry name" value="Nic_PRibTrfase-Fam"/>
</dbReference>
<dbReference type="InterPro" id="IPR036068">
    <property type="entry name" value="Nicotinate_pribotase-like_C"/>
</dbReference>
<dbReference type="NCBIfam" id="TIGR01514">
    <property type="entry name" value="NAPRTase"/>
    <property type="match status" value="1"/>
</dbReference>
<dbReference type="NCBIfam" id="NF003704">
    <property type="entry name" value="PRK05321.1"/>
    <property type="match status" value="1"/>
</dbReference>
<dbReference type="PANTHER" id="PTHR11098">
    <property type="entry name" value="NICOTINATE PHOSPHORIBOSYLTRANSFERASE"/>
    <property type="match status" value="1"/>
</dbReference>
<dbReference type="PANTHER" id="PTHR11098:SF1">
    <property type="entry name" value="NICOTINATE PHOSPHORIBOSYLTRANSFERASE"/>
    <property type="match status" value="1"/>
</dbReference>
<dbReference type="Pfam" id="PF04095">
    <property type="entry name" value="NAPRTase"/>
    <property type="match status" value="1"/>
</dbReference>
<dbReference type="Pfam" id="PF17767">
    <property type="entry name" value="NAPRTase_N"/>
    <property type="match status" value="1"/>
</dbReference>
<dbReference type="PIRSF" id="PIRSF000484">
    <property type="entry name" value="NAPRT"/>
    <property type="match status" value="1"/>
</dbReference>
<dbReference type="SUPFAM" id="SSF51690">
    <property type="entry name" value="Nicotinate/Quinolinate PRTase C-terminal domain-like"/>
    <property type="match status" value="1"/>
</dbReference>
<dbReference type="SUPFAM" id="SSF54675">
    <property type="entry name" value="Nicotinate/Quinolinate PRTase N-terminal domain-like"/>
    <property type="match status" value="1"/>
</dbReference>
<reference key="1">
    <citation type="journal article" date="2008" name="PLoS ONE">
        <title>Genome sequence of Brucella abortus vaccine strain S19 compared to virulent strains yields candidate virulence genes.</title>
        <authorList>
            <person name="Crasta O.R."/>
            <person name="Folkerts O."/>
            <person name="Fei Z."/>
            <person name="Mane S.P."/>
            <person name="Evans C."/>
            <person name="Martino-Catt S."/>
            <person name="Bricker B."/>
            <person name="Yu G."/>
            <person name="Du L."/>
            <person name="Sobral B.W."/>
        </authorList>
    </citation>
    <scope>NUCLEOTIDE SEQUENCE [LARGE SCALE GENOMIC DNA]</scope>
    <source>
        <strain>S19</strain>
    </source>
</reference>
<name>PNCB_BRUA1</name>
<accession>B2S8A9</accession>
<gene>
    <name evidence="1" type="primary">pncB</name>
    <name type="ordered locus">BAbS19_I01040</name>
</gene>
<keyword id="KW-0436">Ligase</keyword>
<keyword id="KW-0597">Phosphoprotein</keyword>
<keyword id="KW-0662">Pyridine nucleotide biosynthesis</keyword>
<sequence>MAKTDLARRVYNHTWKLDPIIRSLLDTDFYKLLMLQMIWGLYPRVDATFSLINRTSSVRLADEIDEGELRAQLDHARTLRFSKKEMIWLAGNTFYGRKQIFQPEFLAWLHDFQLPEYELRRKDGQYELHFHGPWTHTTMWEIPALAIINELRSRAAMKNLGPFSLDVLYARAKAKMWSKVERLRQLPDLKISDFGTRRRHSFLWQRWCVEALKEGIGSAFTGTSNVLLAMDTDLEALGTNAHELPMVLAALAKTDDELRSAPYRVLQDWNRYYGGNLLIVLPDAFGTAAFLRNAPDWVADWTGFRPDSAPPIEGGERIIEWWKSKGKDPREKLLIFSDALDVDTIEETYRHFEGRVRMGFGWGTNLTNDFAGCAPQSIDGLKAISLVCKVTDANGHPAVKLSDNPQKATGDPKEVARYLRFFGNEERVEQLVRV</sequence>